<dbReference type="EC" id="7.2.2.10"/>
<dbReference type="EMBL" id="U03060">
    <property type="protein sequence ID" value="AAC48919.1"/>
    <property type="molecule type" value="Unassigned_DNA"/>
</dbReference>
<dbReference type="EMBL" id="Z72528">
    <property type="protein sequence ID" value="CAA96706.1"/>
    <property type="molecule type" value="Genomic_DNA"/>
</dbReference>
<dbReference type="EMBL" id="BK006941">
    <property type="protein sequence ID" value="DAA08093.1"/>
    <property type="molecule type" value="Genomic_DNA"/>
</dbReference>
<dbReference type="PIR" id="S48877">
    <property type="entry name" value="S48877"/>
</dbReference>
<dbReference type="RefSeq" id="NP_011509.1">
    <property type="nucleotide sequence ID" value="NM_001180871.1"/>
</dbReference>
<dbReference type="SMR" id="P38929"/>
<dbReference type="BioGRID" id="33239">
    <property type="interactions" value="98"/>
</dbReference>
<dbReference type="DIP" id="DIP-5901N"/>
<dbReference type="FunCoup" id="P38929">
    <property type="interactions" value="583"/>
</dbReference>
<dbReference type="IntAct" id="P38929">
    <property type="interactions" value="40"/>
</dbReference>
<dbReference type="MINT" id="P38929"/>
<dbReference type="STRING" id="4932.YGL006W"/>
<dbReference type="TCDB" id="3.A.3.2.2">
    <property type="family name" value="the p-type atpase (p-atpase) superfamily"/>
</dbReference>
<dbReference type="iPTMnet" id="P38929"/>
<dbReference type="PaxDb" id="4932-YGL006W"/>
<dbReference type="PeptideAtlas" id="P38929"/>
<dbReference type="EnsemblFungi" id="YGL006W_mRNA">
    <property type="protein sequence ID" value="YGL006W"/>
    <property type="gene ID" value="YGL006W"/>
</dbReference>
<dbReference type="GeneID" id="852878"/>
<dbReference type="KEGG" id="sce:YGL006W"/>
<dbReference type="AGR" id="SGD:S000002974"/>
<dbReference type="SGD" id="S000002974">
    <property type="gene designation" value="PMC1"/>
</dbReference>
<dbReference type="VEuPathDB" id="FungiDB:YGL006W"/>
<dbReference type="eggNOG" id="KOG0204">
    <property type="taxonomic scope" value="Eukaryota"/>
</dbReference>
<dbReference type="HOGENOM" id="CLU_002360_9_2_1"/>
<dbReference type="InParanoid" id="P38929"/>
<dbReference type="OMA" id="YRMYVKG"/>
<dbReference type="OrthoDB" id="3352408at2759"/>
<dbReference type="BioCyc" id="YEAST:G3O-30530-MONOMER"/>
<dbReference type="Reactome" id="R-SCE-418359">
    <property type="pathway name" value="Reduction of cytosolic Ca++ levels"/>
</dbReference>
<dbReference type="Reactome" id="R-SCE-5578775">
    <property type="pathway name" value="Ion homeostasis"/>
</dbReference>
<dbReference type="Reactome" id="R-SCE-936837">
    <property type="pathway name" value="Ion transport by P-type ATPases"/>
</dbReference>
<dbReference type="BioGRID-ORCS" id="852878">
    <property type="hits" value="0 hits in 10 CRISPR screens"/>
</dbReference>
<dbReference type="PRO" id="PR:P38929"/>
<dbReference type="Proteomes" id="UP000002311">
    <property type="component" value="Chromosome VII"/>
</dbReference>
<dbReference type="RNAct" id="P38929">
    <property type="molecule type" value="protein"/>
</dbReference>
<dbReference type="GO" id="GO:0000329">
    <property type="term" value="C:fungal-type vacuole membrane"/>
    <property type="evidence" value="ECO:0000314"/>
    <property type="project" value="SGD"/>
</dbReference>
<dbReference type="GO" id="GO:0043231">
    <property type="term" value="C:intracellular membrane-bounded organelle"/>
    <property type="evidence" value="ECO:0000318"/>
    <property type="project" value="GO_Central"/>
</dbReference>
<dbReference type="GO" id="GO:0005886">
    <property type="term" value="C:plasma membrane"/>
    <property type="evidence" value="ECO:0000318"/>
    <property type="project" value="GO_Central"/>
</dbReference>
<dbReference type="GO" id="GO:0005524">
    <property type="term" value="F:ATP binding"/>
    <property type="evidence" value="ECO:0007669"/>
    <property type="project" value="UniProtKB-KW"/>
</dbReference>
<dbReference type="GO" id="GO:0016887">
    <property type="term" value="F:ATP hydrolysis activity"/>
    <property type="evidence" value="ECO:0007669"/>
    <property type="project" value="InterPro"/>
</dbReference>
<dbReference type="GO" id="GO:0046872">
    <property type="term" value="F:metal ion binding"/>
    <property type="evidence" value="ECO:0007669"/>
    <property type="project" value="UniProtKB-KW"/>
</dbReference>
<dbReference type="GO" id="GO:0005388">
    <property type="term" value="F:P-type calcium transporter activity"/>
    <property type="evidence" value="ECO:0000315"/>
    <property type="project" value="SGD"/>
</dbReference>
<dbReference type="GO" id="GO:0006816">
    <property type="term" value="P:calcium ion transport"/>
    <property type="evidence" value="ECO:0000315"/>
    <property type="project" value="SGD"/>
</dbReference>
<dbReference type="GO" id="GO:0006874">
    <property type="term" value="P:intracellular calcium ion homeostasis"/>
    <property type="evidence" value="ECO:0000315"/>
    <property type="project" value="UniProtKB"/>
</dbReference>
<dbReference type="GO" id="GO:0055085">
    <property type="term" value="P:transmembrane transport"/>
    <property type="evidence" value="ECO:0000315"/>
    <property type="project" value="SGD"/>
</dbReference>
<dbReference type="CDD" id="cd02081">
    <property type="entry name" value="P-type_ATPase_Ca_PMCA-like"/>
    <property type="match status" value="1"/>
</dbReference>
<dbReference type="FunFam" id="3.40.1110.10:FF:000131">
    <property type="entry name" value="Calcium-transporting ATPase"/>
    <property type="match status" value="1"/>
</dbReference>
<dbReference type="FunFam" id="3.40.50.1000:FF:000018">
    <property type="entry name" value="Calcium-transporting ATPase"/>
    <property type="match status" value="1"/>
</dbReference>
<dbReference type="Gene3D" id="3.40.1110.10">
    <property type="entry name" value="Calcium-transporting ATPase, cytoplasmic domain N"/>
    <property type="match status" value="1"/>
</dbReference>
<dbReference type="Gene3D" id="2.70.150.10">
    <property type="entry name" value="Calcium-transporting ATPase, cytoplasmic transduction domain A"/>
    <property type="match status" value="1"/>
</dbReference>
<dbReference type="Gene3D" id="1.20.1110.10">
    <property type="entry name" value="Calcium-transporting ATPase, transmembrane domain"/>
    <property type="match status" value="1"/>
</dbReference>
<dbReference type="Gene3D" id="3.40.50.1000">
    <property type="entry name" value="HAD superfamily/HAD-like"/>
    <property type="match status" value="1"/>
</dbReference>
<dbReference type="InterPro" id="IPR006068">
    <property type="entry name" value="ATPase_P-typ_cation-transptr_C"/>
</dbReference>
<dbReference type="InterPro" id="IPR004014">
    <property type="entry name" value="ATPase_P-typ_cation-transptr_N"/>
</dbReference>
<dbReference type="InterPro" id="IPR023299">
    <property type="entry name" value="ATPase_P-typ_cyto_dom_N"/>
</dbReference>
<dbReference type="InterPro" id="IPR018303">
    <property type="entry name" value="ATPase_P-typ_P_site"/>
</dbReference>
<dbReference type="InterPro" id="IPR023298">
    <property type="entry name" value="ATPase_P-typ_TM_dom_sf"/>
</dbReference>
<dbReference type="InterPro" id="IPR008250">
    <property type="entry name" value="ATPase_P-typ_transduc_dom_A_sf"/>
</dbReference>
<dbReference type="InterPro" id="IPR036412">
    <property type="entry name" value="HAD-like_sf"/>
</dbReference>
<dbReference type="InterPro" id="IPR023214">
    <property type="entry name" value="HAD_sf"/>
</dbReference>
<dbReference type="InterPro" id="IPR006408">
    <property type="entry name" value="P-type_ATPase_IIB"/>
</dbReference>
<dbReference type="InterPro" id="IPR001757">
    <property type="entry name" value="P_typ_ATPase"/>
</dbReference>
<dbReference type="InterPro" id="IPR044492">
    <property type="entry name" value="P_typ_ATPase_HD_dom"/>
</dbReference>
<dbReference type="NCBIfam" id="TIGR01517">
    <property type="entry name" value="ATPase-IIB_Ca"/>
    <property type="match status" value="1"/>
</dbReference>
<dbReference type="NCBIfam" id="TIGR01494">
    <property type="entry name" value="ATPase_P-type"/>
    <property type="match status" value="3"/>
</dbReference>
<dbReference type="PANTHER" id="PTHR24093:SF369">
    <property type="entry name" value="CALCIUM-TRANSPORTING ATPASE"/>
    <property type="match status" value="1"/>
</dbReference>
<dbReference type="PANTHER" id="PTHR24093">
    <property type="entry name" value="CATION TRANSPORTING ATPASE"/>
    <property type="match status" value="1"/>
</dbReference>
<dbReference type="Pfam" id="PF13246">
    <property type="entry name" value="Cation_ATPase"/>
    <property type="match status" value="1"/>
</dbReference>
<dbReference type="Pfam" id="PF00689">
    <property type="entry name" value="Cation_ATPase_C"/>
    <property type="match status" value="1"/>
</dbReference>
<dbReference type="Pfam" id="PF00690">
    <property type="entry name" value="Cation_ATPase_N"/>
    <property type="match status" value="1"/>
</dbReference>
<dbReference type="Pfam" id="PF00122">
    <property type="entry name" value="E1-E2_ATPase"/>
    <property type="match status" value="1"/>
</dbReference>
<dbReference type="Pfam" id="PF00702">
    <property type="entry name" value="Hydrolase"/>
    <property type="match status" value="1"/>
</dbReference>
<dbReference type="PRINTS" id="PR00119">
    <property type="entry name" value="CATATPASE"/>
</dbReference>
<dbReference type="SFLD" id="SFLDG00002">
    <property type="entry name" value="C1.7:_P-type_atpase_like"/>
    <property type="match status" value="1"/>
</dbReference>
<dbReference type="SFLD" id="SFLDF00027">
    <property type="entry name" value="p-type_atpase"/>
    <property type="match status" value="1"/>
</dbReference>
<dbReference type="SMART" id="SM00831">
    <property type="entry name" value="Cation_ATPase_N"/>
    <property type="match status" value="1"/>
</dbReference>
<dbReference type="SUPFAM" id="SSF81653">
    <property type="entry name" value="Calcium ATPase, transduction domain A"/>
    <property type="match status" value="1"/>
</dbReference>
<dbReference type="SUPFAM" id="SSF81665">
    <property type="entry name" value="Calcium ATPase, transmembrane domain M"/>
    <property type="match status" value="1"/>
</dbReference>
<dbReference type="SUPFAM" id="SSF56784">
    <property type="entry name" value="HAD-like"/>
    <property type="match status" value="1"/>
</dbReference>
<dbReference type="SUPFAM" id="SSF81660">
    <property type="entry name" value="Metal cation-transporting ATPase, ATP-binding domain N"/>
    <property type="match status" value="1"/>
</dbReference>
<dbReference type="PROSITE" id="PS00154">
    <property type="entry name" value="ATPASE_E1_E2"/>
    <property type="match status" value="1"/>
</dbReference>
<accession>P38929</accession>
<accession>D6VUD2</accession>
<name>ATC2_YEAST</name>
<reference key="1">
    <citation type="journal article" date="1994" name="J. Cell Biol.">
        <title>Calcineurin-dependent growth control in Saccharomyces cerevisiae mutants lacking PMC1, a homolog of plasma membrane Ca2+ ATPases.</title>
        <authorList>
            <person name="Cunningham K.W."/>
            <person name="Fink G.R."/>
        </authorList>
    </citation>
    <scope>NUCLEOTIDE SEQUENCE</scope>
</reference>
<reference key="2">
    <citation type="journal article" date="1997" name="Nature">
        <title>The nucleotide sequence of Saccharomyces cerevisiae chromosome VII.</title>
        <authorList>
            <person name="Tettelin H."/>
            <person name="Agostoni-Carbone M.L."/>
            <person name="Albermann K."/>
            <person name="Albers M."/>
            <person name="Arroyo J."/>
            <person name="Backes U."/>
            <person name="Barreiros T."/>
            <person name="Bertani I."/>
            <person name="Bjourson A.J."/>
            <person name="Brueckner M."/>
            <person name="Bruschi C.V."/>
            <person name="Carignani G."/>
            <person name="Castagnoli L."/>
            <person name="Cerdan E."/>
            <person name="Clemente M.L."/>
            <person name="Coblenz A."/>
            <person name="Coglievina M."/>
            <person name="Coissac E."/>
            <person name="Defoor E."/>
            <person name="Del Bino S."/>
            <person name="Delius H."/>
            <person name="Delneri D."/>
            <person name="de Wergifosse P."/>
            <person name="Dujon B."/>
            <person name="Durand P."/>
            <person name="Entian K.-D."/>
            <person name="Eraso P."/>
            <person name="Escribano V."/>
            <person name="Fabiani L."/>
            <person name="Fartmann B."/>
            <person name="Feroli F."/>
            <person name="Feuermann M."/>
            <person name="Frontali L."/>
            <person name="Garcia-Gonzalez M."/>
            <person name="Garcia-Saez M.I."/>
            <person name="Goffeau A."/>
            <person name="Guerreiro P."/>
            <person name="Hani J."/>
            <person name="Hansen M."/>
            <person name="Hebling U."/>
            <person name="Hernandez K."/>
            <person name="Heumann K."/>
            <person name="Hilger F."/>
            <person name="Hofmann B."/>
            <person name="Indge K.J."/>
            <person name="James C.M."/>
            <person name="Klima R."/>
            <person name="Koetter P."/>
            <person name="Kramer B."/>
            <person name="Kramer W."/>
            <person name="Lauquin G."/>
            <person name="Leuther H."/>
            <person name="Louis E.J."/>
            <person name="Maillier E."/>
            <person name="Marconi A."/>
            <person name="Martegani E."/>
            <person name="Mazon M.J."/>
            <person name="Mazzoni C."/>
            <person name="McReynolds A.D.K."/>
            <person name="Melchioretto P."/>
            <person name="Mewes H.-W."/>
            <person name="Minenkova O."/>
            <person name="Mueller-Auer S."/>
            <person name="Nawrocki A."/>
            <person name="Netter P."/>
            <person name="Neu R."/>
            <person name="Nombela C."/>
            <person name="Oliver S.G."/>
            <person name="Panzeri L."/>
            <person name="Paoluzi S."/>
            <person name="Plevani P."/>
            <person name="Portetelle D."/>
            <person name="Portillo F."/>
            <person name="Potier S."/>
            <person name="Purnelle B."/>
            <person name="Rieger M."/>
            <person name="Riles L."/>
            <person name="Rinaldi T."/>
            <person name="Robben J."/>
            <person name="Rodrigues-Pousada C."/>
            <person name="Rodriguez-Belmonte E."/>
            <person name="Rodriguez-Torres A.M."/>
            <person name="Rose M."/>
            <person name="Ruzzi M."/>
            <person name="Saliola M."/>
            <person name="Sanchez-Perez M."/>
            <person name="Schaefer B."/>
            <person name="Schaefer M."/>
            <person name="Scharfe M."/>
            <person name="Schmidheini T."/>
            <person name="Schreer A."/>
            <person name="Skala J."/>
            <person name="Souciet J.-L."/>
            <person name="Steensma H.Y."/>
            <person name="Talla E."/>
            <person name="Thierry A."/>
            <person name="Vandenbol M."/>
            <person name="van der Aart Q.J.M."/>
            <person name="Van Dyck L."/>
            <person name="Vanoni M."/>
            <person name="Verhasselt P."/>
            <person name="Voet M."/>
            <person name="Volckaert G."/>
            <person name="Wambutt R."/>
            <person name="Watson M.D."/>
            <person name="Weber N."/>
            <person name="Wedler E."/>
            <person name="Wedler H."/>
            <person name="Wipfli P."/>
            <person name="Wolf K."/>
            <person name="Wright L.F."/>
            <person name="Zaccaria P."/>
            <person name="Zimmermann M."/>
            <person name="Zollner A."/>
            <person name="Kleine K."/>
        </authorList>
    </citation>
    <scope>NUCLEOTIDE SEQUENCE [LARGE SCALE GENOMIC DNA]</scope>
    <source>
        <strain>ATCC 204508 / S288c</strain>
    </source>
</reference>
<reference key="3">
    <citation type="journal article" date="2014" name="G3 (Bethesda)">
        <title>The reference genome sequence of Saccharomyces cerevisiae: Then and now.</title>
        <authorList>
            <person name="Engel S.R."/>
            <person name="Dietrich F.S."/>
            <person name="Fisk D.G."/>
            <person name="Binkley G."/>
            <person name="Balakrishnan R."/>
            <person name="Costanzo M.C."/>
            <person name="Dwight S.S."/>
            <person name="Hitz B.C."/>
            <person name="Karra K."/>
            <person name="Nash R.S."/>
            <person name="Weng S."/>
            <person name="Wong E.D."/>
            <person name="Lloyd P."/>
            <person name="Skrzypek M.S."/>
            <person name="Miyasato S.R."/>
            <person name="Simison M."/>
            <person name="Cherry J.M."/>
        </authorList>
    </citation>
    <scope>GENOME REANNOTATION</scope>
    <source>
        <strain>ATCC 204508 / S288c</strain>
    </source>
</reference>
<reference key="4">
    <citation type="journal article" date="2003" name="Nature">
        <title>Global analysis of protein expression in yeast.</title>
        <authorList>
            <person name="Ghaemmaghami S."/>
            <person name="Huh W.-K."/>
            <person name="Bower K."/>
            <person name="Howson R.W."/>
            <person name="Belle A."/>
            <person name="Dephoure N."/>
            <person name="O'Shea E.K."/>
            <person name="Weissman J.S."/>
        </authorList>
    </citation>
    <scope>LEVEL OF PROTEIN EXPRESSION [LARGE SCALE ANALYSIS]</scope>
</reference>
<evidence type="ECO:0000250" key="1">
    <source>
        <dbReference type="UniProtKB" id="P04191"/>
    </source>
</evidence>
<evidence type="ECO:0000256" key="2">
    <source>
        <dbReference type="SAM" id="MobiDB-lite"/>
    </source>
</evidence>
<evidence type="ECO:0000269" key="3">
    <source>
    </source>
</evidence>
<evidence type="ECO:0000305" key="4"/>
<sequence length="1173" mass="130861">MSRQDENSALLANNENNKPSYTGNENGVYDNFKLSKSQLSDLHNPKSIRSFVRLFGYESNSLFKYLKTDKNAGISLPEISNYRKTNRYKNYGDNSLPERIPKSFLQLVWAAFNDKTMQLLTVAAVVSFVLGLYELWMQPPQYDPEGNKIKQVDWIEGVAIMIAVFVVVLVSAANDYQKELQFAKLNKKKENRKIIVIRNDQEILISIHHVLVGDVISLQTGDVVPADCVMISGKCEADESSITGESNTIQKFPVDNSLRDFKKFNSIDSHNHSKPLDIGDVNEDGNKIADCMLISGSRILSGLGRGVITSVGINSVYGQTMTSLNAEPESTPLQLHLSQLADNISVYGCVSAIILFLVLFTRYLFYIIPEDGRFHDLDPAQKGSKFMNIFITSITVIVVAVPEGLPLAVTLALAFATTRMTKDGNLVRVLRSCETMGSATAVCSDKTGTLTENVMTVVRGFPGNSKFDDSKSLPVSEQRKLNSKKVFEENCSSSLRNDLLANIVLNSTAFENRDYKKNDKNTNGSKNMSKNLSFLDKCKSRLSFFKKGNREDDEDQLFKNVNKGRQEPFIGSKTETALLSLARLSLGLQPGELQYLRDQPMEKFNIEKVVQTIPFESSRKWAGLVVKYKEGKNKKPFYRFFIKGAAEIVSKNCSYKRNSDDTLEEINEDNKKETDDEIKNLASDALRAISVAHKDFCECDSWPPEQLRDKDSPNIAALDLLFNSQKGLILDGLLGIQDPLRAGVRESVQQCQRAGVTVRMVTGDNILTAKAIARNCAILSTDISSEAYSAMEGTEFRKLTKNERIRILPNLRVLARSSPEDKRLLVETLKGMGDVVAVTGDGTNDAPALKLADVGFSMGISGTEVAREASDIILMTDDFSAIVNAIKWGRCVSVSIKKFIQFQLIVNITAVILTFVSSVASSDETSVLTAVQLLWINLIMDTLAALALATDKPDPNIMDRKPRGRSTSLISVSTWKMILSQATLQLIVTFILHFYGPELFFKKHEDEITSHQQQQLNAMTFNTFVWLQFFTMLVSRKLDEGDGISNWRGRISAANLNFFQDLGRNYYFLTIMAIIGSCQVLIMFFGGAPFSIARQTKSMWITAVLCGMLSLIMGVLVRICPDEVAVKVFPAAFVQRFKYVFGLEFLRKNHTGKHDDEEALLEESDSPESTAFY</sequence>
<gene>
    <name type="primary">PMC1</name>
    <name type="ordered locus">YGL006W</name>
</gene>
<comment type="function">
    <text>This magnesium-dependent enzyme catalyzes the hydrolysis of ATP coupled with the transport of calcium. Transports the calcium to the vacuole and participates in the control of the cytosolic free calcium.</text>
</comment>
<comment type="catalytic activity">
    <reaction>
        <text>Ca(2+)(in) + ATP + H2O = Ca(2+)(out) + ADP + phosphate + H(+)</text>
        <dbReference type="Rhea" id="RHEA:18105"/>
        <dbReference type="ChEBI" id="CHEBI:15377"/>
        <dbReference type="ChEBI" id="CHEBI:15378"/>
        <dbReference type="ChEBI" id="CHEBI:29108"/>
        <dbReference type="ChEBI" id="CHEBI:30616"/>
        <dbReference type="ChEBI" id="CHEBI:43474"/>
        <dbReference type="ChEBI" id="CHEBI:456216"/>
        <dbReference type="EC" id="7.2.2.10"/>
    </reaction>
</comment>
<comment type="interaction">
    <interactant intactId="EBI-3097">
        <id>P38929</id>
    </interactant>
    <interactant intactId="EBI-20959">
        <id>P38310</id>
        <label>FTH1</label>
    </interactant>
    <organismsDiffer>false</organismsDiffer>
    <experiments>3</experiments>
</comment>
<comment type="subcellular location">
    <subcellularLocation>
        <location>Vacuole membrane</location>
        <topology>Multi-pass membrane protein</topology>
    </subcellularLocation>
</comment>
<comment type="miscellaneous">
    <text evidence="3">Present with 98 molecules/cell in log phase SD medium.</text>
</comment>
<comment type="similarity">
    <text evidence="4">Belongs to the cation transport ATPase (P-type) (TC 3.A.3) family.</text>
</comment>
<feature type="chain" id="PRO_0000046232" description="Calcium-transporting ATPase 2">
    <location>
        <begin position="1"/>
        <end position="1173"/>
    </location>
</feature>
<feature type="topological domain" description="Cytoplasmic" evidence="4">
    <location>
        <begin position="1"/>
        <end position="114"/>
    </location>
</feature>
<feature type="transmembrane region" description="Helical" evidence="4">
    <location>
        <begin position="115"/>
        <end position="139"/>
    </location>
</feature>
<feature type="topological domain" description="Vacuolar" evidence="4">
    <location>
        <begin position="140"/>
        <end position="152"/>
    </location>
</feature>
<feature type="transmembrane region" description="Helical" evidence="4">
    <location>
        <begin position="153"/>
        <end position="173"/>
    </location>
</feature>
<feature type="topological domain" description="Cytoplasmic" evidence="4">
    <location>
        <begin position="174"/>
        <end position="349"/>
    </location>
</feature>
<feature type="transmembrane region" description="Helical" evidence="4">
    <location>
        <begin position="350"/>
        <end position="368"/>
    </location>
</feature>
<feature type="topological domain" description="Vacuolar" evidence="4">
    <location>
        <begin position="369"/>
        <end position="388"/>
    </location>
</feature>
<feature type="transmembrane region" description="Helical" evidence="4">
    <location>
        <begin position="389"/>
        <end position="409"/>
    </location>
</feature>
<feature type="topological domain" description="Cytoplasmic" evidence="4">
    <location>
        <begin position="410"/>
        <end position="899"/>
    </location>
</feature>
<feature type="transmembrane region" description="Helical" evidence="4">
    <location>
        <begin position="900"/>
        <end position="922"/>
    </location>
</feature>
<feature type="topological domain" description="Vacuolar" evidence="4">
    <location>
        <begin position="923"/>
        <end position="929"/>
    </location>
</feature>
<feature type="transmembrane region" description="Helical" evidence="4">
    <location>
        <begin position="930"/>
        <end position="950"/>
    </location>
</feature>
<feature type="topological domain" description="Cytoplasmic" evidence="4">
    <location>
        <begin position="951"/>
        <end position="976"/>
    </location>
</feature>
<feature type="transmembrane region" description="Helical" evidence="4">
    <location>
        <begin position="977"/>
        <end position="998"/>
    </location>
</feature>
<feature type="topological domain" description="Vacuolar" evidence="4">
    <location>
        <begin position="999"/>
        <end position="1010"/>
    </location>
</feature>
<feature type="transmembrane region" description="Helical" evidence="4">
    <location>
        <begin position="1011"/>
        <end position="1029"/>
    </location>
</feature>
<feature type="topological domain" description="Cytoplasmic" evidence="4">
    <location>
        <begin position="1030"/>
        <end position="1065"/>
    </location>
</feature>
<feature type="transmembrane region" description="Helical" evidence="4">
    <location>
        <begin position="1066"/>
        <end position="1086"/>
    </location>
</feature>
<feature type="topological domain" description="Vacuolar" evidence="4">
    <location>
        <begin position="1087"/>
        <end position="1099"/>
    </location>
</feature>
<feature type="transmembrane region" description="Helical" evidence="4">
    <location>
        <begin position="1100"/>
        <end position="1120"/>
    </location>
</feature>
<feature type="topological domain" description="Cytoplasmic" evidence="4">
    <location>
        <begin position="1121"/>
        <end position="1173"/>
    </location>
</feature>
<feature type="region of interest" description="Disordered" evidence="2">
    <location>
        <begin position="1"/>
        <end position="24"/>
    </location>
</feature>
<feature type="compositionally biased region" description="Low complexity" evidence="2">
    <location>
        <begin position="7"/>
        <end position="17"/>
    </location>
</feature>
<feature type="active site" description="4-aspartylphosphate intermediate" evidence="1">
    <location>
        <position position="445"/>
    </location>
</feature>
<feature type="binding site" evidence="1">
    <location>
        <position position="398"/>
    </location>
    <ligand>
        <name>Ca(2+)</name>
        <dbReference type="ChEBI" id="CHEBI:29108"/>
        <label>1</label>
    </ligand>
</feature>
<feature type="binding site" evidence="1">
    <location>
        <position position="403"/>
    </location>
    <ligand>
        <name>Ca(2+)</name>
        <dbReference type="ChEBI" id="CHEBI:29108"/>
        <label>1</label>
    </ligand>
</feature>
<feature type="binding site" evidence="1">
    <location>
        <position position="445"/>
    </location>
    <ligand>
        <name>Mg(2+)</name>
        <dbReference type="ChEBI" id="CHEBI:18420"/>
    </ligand>
</feature>
<feature type="binding site" evidence="1">
    <location>
        <position position="447"/>
    </location>
    <ligand>
        <name>ATP</name>
        <dbReference type="ChEBI" id="CHEBI:30616"/>
    </ligand>
</feature>
<feature type="binding site" evidence="1">
    <location>
        <position position="447"/>
    </location>
    <ligand>
        <name>Mg(2+)</name>
        <dbReference type="ChEBI" id="CHEBI:18420"/>
    </ligand>
</feature>
<feature type="binding site" evidence="1">
    <location>
        <position position="643"/>
    </location>
    <ligand>
        <name>ATP</name>
        <dbReference type="ChEBI" id="CHEBI:30616"/>
    </ligand>
</feature>
<feature type="binding site" evidence="1">
    <location>
        <begin position="762"/>
        <end position="764"/>
    </location>
    <ligand>
        <name>ATP</name>
        <dbReference type="ChEBI" id="CHEBI:30616"/>
    </ligand>
</feature>
<feature type="binding site" evidence="1">
    <location>
        <position position="816"/>
    </location>
    <ligand>
        <name>ATP</name>
        <dbReference type="ChEBI" id="CHEBI:30616"/>
    </ligand>
</feature>
<feature type="binding site" evidence="1">
    <location>
        <position position="822"/>
    </location>
    <ligand>
        <name>ATP</name>
        <dbReference type="ChEBI" id="CHEBI:30616"/>
    </ligand>
</feature>
<feature type="binding site" evidence="1">
    <location>
        <position position="841"/>
    </location>
    <ligand>
        <name>Mg(2+)</name>
        <dbReference type="ChEBI" id="CHEBI:18420"/>
    </ligand>
</feature>
<feature type="binding site" evidence="1">
    <location>
        <position position="844"/>
    </location>
    <ligand>
        <name>ATP</name>
        <dbReference type="ChEBI" id="CHEBI:30616"/>
    </ligand>
</feature>
<feature type="binding site" evidence="1">
    <location>
        <position position="907"/>
    </location>
    <ligand>
        <name>Ca(2+)</name>
        <dbReference type="ChEBI" id="CHEBI:29108"/>
        <label>2</label>
    </ligand>
</feature>
<feature type="binding site" evidence="1">
    <location>
        <position position="937"/>
    </location>
    <ligand>
        <name>Ca(2+)</name>
        <dbReference type="ChEBI" id="CHEBI:29108"/>
        <label>1</label>
    </ligand>
</feature>
<feature type="binding site" evidence="1">
    <location>
        <position position="941"/>
    </location>
    <ligand>
        <name>Ca(2+)</name>
        <dbReference type="ChEBI" id="CHEBI:29108"/>
        <label>1</label>
    </ligand>
</feature>
<feature type="binding site" evidence="1">
    <location>
        <position position="941"/>
    </location>
    <ligand>
        <name>Ca(2+)</name>
        <dbReference type="ChEBI" id="CHEBI:29108"/>
        <label>2</label>
    </ligand>
</feature>
<protein>
    <recommendedName>
        <fullName>Calcium-transporting ATPase 2</fullName>
        <ecNumber>7.2.2.10</ecNumber>
    </recommendedName>
    <alternativeName>
        <fullName>Vacuolar Ca(2+)-ATPase</fullName>
    </alternativeName>
</protein>
<organism>
    <name type="scientific">Saccharomyces cerevisiae (strain ATCC 204508 / S288c)</name>
    <name type="common">Baker's yeast</name>
    <dbReference type="NCBI Taxonomy" id="559292"/>
    <lineage>
        <taxon>Eukaryota</taxon>
        <taxon>Fungi</taxon>
        <taxon>Dikarya</taxon>
        <taxon>Ascomycota</taxon>
        <taxon>Saccharomycotina</taxon>
        <taxon>Saccharomycetes</taxon>
        <taxon>Saccharomycetales</taxon>
        <taxon>Saccharomycetaceae</taxon>
        <taxon>Saccharomyces</taxon>
    </lineage>
</organism>
<proteinExistence type="evidence at protein level"/>
<keyword id="KW-0067">ATP-binding</keyword>
<keyword id="KW-0106">Calcium</keyword>
<keyword id="KW-0109">Calcium transport</keyword>
<keyword id="KW-0406">Ion transport</keyword>
<keyword id="KW-0460">Magnesium</keyword>
<keyword id="KW-0472">Membrane</keyword>
<keyword id="KW-0479">Metal-binding</keyword>
<keyword id="KW-0547">Nucleotide-binding</keyword>
<keyword id="KW-1185">Reference proteome</keyword>
<keyword id="KW-1278">Translocase</keyword>
<keyword id="KW-0812">Transmembrane</keyword>
<keyword id="KW-1133">Transmembrane helix</keyword>
<keyword id="KW-0813">Transport</keyword>
<keyword id="KW-0926">Vacuole</keyword>